<name>Y3715_OPITP</name>
<evidence type="ECO:0000255" key="1">
    <source>
        <dbReference type="HAMAP-Rule" id="MF_01584"/>
    </source>
</evidence>
<accession>B1ZXJ5</accession>
<dbReference type="EMBL" id="CP001032">
    <property type="protein sequence ID" value="ACB76990.1"/>
    <property type="molecule type" value="Genomic_DNA"/>
</dbReference>
<dbReference type="RefSeq" id="WP_012376519.1">
    <property type="nucleotide sequence ID" value="NC_010571.1"/>
</dbReference>
<dbReference type="SMR" id="B1ZXJ5"/>
<dbReference type="STRING" id="452637.Oter_3715"/>
<dbReference type="KEGG" id="ote:Oter_3715"/>
<dbReference type="eggNOG" id="COG3132">
    <property type="taxonomic scope" value="Bacteria"/>
</dbReference>
<dbReference type="HOGENOM" id="CLU_057831_1_0_0"/>
<dbReference type="OrthoDB" id="9784785at2"/>
<dbReference type="Proteomes" id="UP000007013">
    <property type="component" value="Chromosome"/>
</dbReference>
<dbReference type="Gene3D" id="1.10.10.10">
    <property type="entry name" value="Winged helix-like DNA-binding domain superfamily/Winged helix DNA-binding domain"/>
    <property type="match status" value="2"/>
</dbReference>
<dbReference type="HAMAP" id="MF_01584">
    <property type="entry name" value="UPF0502"/>
    <property type="match status" value="1"/>
</dbReference>
<dbReference type="InterPro" id="IPR007432">
    <property type="entry name" value="DUF480"/>
</dbReference>
<dbReference type="InterPro" id="IPR036388">
    <property type="entry name" value="WH-like_DNA-bd_sf"/>
</dbReference>
<dbReference type="InterPro" id="IPR036390">
    <property type="entry name" value="WH_DNA-bd_sf"/>
</dbReference>
<dbReference type="PANTHER" id="PTHR38768">
    <property type="entry name" value="UPF0502 PROTEIN YCEH"/>
    <property type="match status" value="1"/>
</dbReference>
<dbReference type="PANTHER" id="PTHR38768:SF1">
    <property type="entry name" value="UPF0502 PROTEIN YCEH"/>
    <property type="match status" value="1"/>
</dbReference>
<dbReference type="Pfam" id="PF04337">
    <property type="entry name" value="DUF480"/>
    <property type="match status" value="1"/>
</dbReference>
<dbReference type="SUPFAM" id="SSF46785">
    <property type="entry name" value="Winged helix' DNA-binding domain"/>
    <property type="match status" value="2"/>
</dbReference>
<comment type="similarity">
    <text evidence="1">Belongs to the UPF0502 family.</text>
</comment>
<feature type="chain" id="PRO_0000382565" description="UPF0502 protein Oter_3715">
    <location>
        <begin position="1"/>
        <end position="230"/>
    </location>
</feature>
<proteinExistence type="inferred from homology"/>
<sequence length="230" mass="25275">MAESTTPEVVAYPAGDEPLPVLSEVEVRVLGALVEKQLTTPEYYPLTLNALVNACNQTSSRDPIVSYDEATVTRGLDGLRDKKLAYVFAGAESRVVKFGHKFAERFELGRAEVAVLCVLLLRGPQTPGELRSRTGRMHAFESLPDLEQTIAALAAKQPHPLVTRLPRQTGFKEVRVTHLLGGSVSVSSAEPAPEPPPVDRTMQLDQDVAALRQELAELREQFAAFRKQFE</sequence>
<organism>
    <name type="scientific">Opitutus terrae (strain DSM 11246 / JCM 15787 / PB90-1)</name>
    <dbReference type="NCBI Taxonomy" id="452637"/>
    <lineage>
        <taxon>Bacteria</taxon>
        <taxon>Pseudomonadati</taxon>
        <taxon>Verrucomicrobiota</taxon>
        <taxon>Opitutia</taxon>
        <taxon>Opitutales</taxon>
        <taxon>Opitutaceae</taxon>
        <taxon>Opitutus</taxon>
    </lineage>
</organism>
<keyword id="KW-1185">Reference proteome</keyword>
<protein>
    <recommendedName>
        <fullName evidence="1">UPF0502 protein Oter_3715</fullName>
    </recommendedName>
</protein>
<reference key="1">
    <citation type="journal article" date="2011" name="J. Bacteriol.">
        <title>Genome sequence of the verrucomicrobium Opitutus terrae PB90-1, an abundant inhabitant of rice paddy soil ecosystems.</title>
        <authorList>
            <person name="van Passel M.W."/>
            <person name="Kant R."/>
            <person name="Palva A."/>
            <person name="Copeland A."/>
            <person name="Lucas S."/>
            <person name="Lapidus A."/>
            <person name="Glavina del Rio T."/>
            <person name="Pitluck S."/>
            <person name="Goltsman E."/>
            <person name="Clum A."/>
            <person name="Sun H."/>
            <person name="Schmutz J."/>
            <person name="Larimer F.W."/>
            <person name="Land M.L."/>
            <person name="Hauser L."/>
            <person name="Kyrpides N."/>
            <person name="Mikhailova N."/>
            <person name="Richardson P.P."/>
            <person name="Janssen P.H."/>
            <person name="de Vos W.M."/>
            <person name="Smidt H."/>
        </authorList>
    </citation>
    <scope>NUCLEOTIDE SEQUENCE [LARGE SCALE GENOMIC DNA]</scope>
    <source>
        <strain>DSM 11246 / JCM 15787 / PB90-1</strain>
    </source>
</reference>
<gene>
    <name type="ordered locus">Oter_3715</name>
</gene>